<proteinExistence type="inferred from homology"/>
<protein>
    <recommendedName>
        <fullName evidence="1">Large ribosomal subunit protein uL30</fullName>
    </recommendedName>
    <alternativeName>
        <fullName evidence="2">50S ribosomal protein L30</fullName>
    </alternativeName>
</protein>
<sequence>MGKKIKITLVKSTIGRKPKHVAIAKQLGLGKTNSSVVHSDTPAIRGLVNEINYLLLVEESA</sequence>
<gene>
    <name evidence="1" type="primary">rpmD</name>
    <name type="ordered locus">lpp0412</name>
</gene>
<feature type="chain" id="PRO_0000273803" description="Large ribosomal subunit protein uL30">
    <location>
        <begin position="1"/>
        <end position="61"/>
    </location>
</feature>
<evidence type="ECO:0000255" key="1">
    <source>
        <dbReference type="HAMAP-Rule" id="MF_01371"/>
    </source>
</evidence>
<evidence type="ECO:0000305" key="2"/>
<name>RL30_LEGPA</name>
<organism>
    <name type="scientific">Legionella pneumophila (strain Paris)</name>
    <dbReference type="NCBI Taxonomy" id="297246"/>
    <lineage>
        <taxon>Bacteria</taxon>
        <taxon>Pseudomonadati</taxon>
        <taxon>Pseudomonadota</taxon>
        <taxon>Gammaproteobacteria</taxon>
        <taxon>Legionellales</taxon>
        <taxon>Legionellaceae</taxon>
        <taxon>Legionella</taxon>
    </lineage>
</organism>
<keyword id="KW-0687">Ribonucleoprotein</keyword>
<keyword id="KW-0689">Ribosomal protein</keyword>
<comment type="subunit">
    <text evidence="1">Part of the 50S ribosomal subunit.</text>
</comment>
<comment type="similarity">
    <text evidence="1">Belongs to the universal ribosomal protein uL30 family.</text>
</comment>
<reference key="1">
    <citation type="journal article" date="2004" name="Nat. Genet.">
        <title>Evidence in the Legionella pneumophila genome for exploitation of host cell functions and high genome plasticity.</title>
        <authorList>
            <person name="Cazalet C."/>
            <person name="Rusniok C."/>
            <person name="Brueggemann H."/>
            <person name="Zidane N."/>
            <person name="Magnier A."/>
            <person name="Ma L."/>
            <person name="Tichit M."/>
            <person name="Jarraud S."/>
            <person name="Bouchier C."/>
            <person name="Vandenesch F."/>
            <person name="Kunst F."/>
            <person name="Etienne J."/>
            <person name="Glaser P."/>
            <person name="Buchrieser C."/>
        </authorList>
    </citation>
    <scope>NUCLEOTIDE SEQUENCE [LARGE SCALE GENOMIC DNA]</scope>
    <source>
        <strain>Paris</strain>
    </source>
</reference>
<accession>Q5X841</accession>
<dbReference type="EMBL" id="CR628336">
    <property type="protein sequence ID" value="CAH11560.1"/>
    <property type="molecule type" value="Genomic_DNA"/>
</dbReference>
<dbReference type="RefSeq" id="WP_010946096.1">
    <property type="nucleotide sequence ID" value="NC_006368.1"/>
</dbReference>
<dbReference type="SMR" id="Q5X841"/>
<dbReference type="GeneID" id="57034350"/>
<dbReference type="KEGG" id="lpp:lpp0412"/>
<dbReference type="LegioList" id="lpp0412"/>
<dbReference type="HOGENOM" id="CLU_131047_1_4_6"/>
<dbReference type="GO" id="GO:0022625">
    <property type="term" value="C:cytosolic large ribosomal subunit"/>
    <property type="evidence" value="ECO:0007669"/>
    <property type="project" value="TreeGrafter"/>
</dbReference>
<dbReference type="GO" id="GO:0003735">
    <property type="term" value="F:structural constituent of ribosome"/>
    <property type="evidence" value="ECO:0007669"/>
    <property type="project" value="InterPro"/>
</dbReference>
<dbReference type="GO" id="GO:0006412">
    <property type="term" value="P:translation"/>
    <property type="evidence" value="ECO:0007669"/>
    <property type="project" value="UniProtKB-UniRule"/>
</dbReference>
<dbReference type="CDD" id="cd01658">
    <property type="entry name" value="Ribosomal_L30"/>
    <property type="match status" value="1"/>
</dbReference>
<dbReference type="Gene3D" id="3.30.1390.20">
    <property type="entry name" value="Ribosomal protein L30, ferredoxin-like fold domain"/>
    <property type="match status" value="1"/>
</dbReference>
<dbReference type="HAMAP" id="MF_01371_B">
    <property type="entry name" value="Ribosomal_uL30_B"/>
    <property type="match status" value="1"/>
</dbReference>
<dbReference type="InterPro" id="IPR036919">
    <property type="entry name" value="Ribo_uL30_ferredoxin-like_sf"/>
</dbReference>
<dbReference type="InterPro" id="IPR005996">
    <property type="entry name" value="Ribosomal_uL30_bac-type"/>
</dbReference>
<dbReference type="InterPro" id="IPR016082">
    <property type="entry name" value="Ribosomal_uL30_ferredoxin-like"/>
</dbReference>
<dbReference type="NCBIfam" id="TIGR01308">
    <property type="entry name" value="rpmD_bact"/>
    <property type="match status" value="1"/>
</dbReference>
<dbReference type="PANTHER" id="PTHR15892:SF2">
    <property type="entry name" value="LARGE RIBOSOMAL SUBUNIT PROTEIN UL30M"/>
    <property type="match status" value="1"/>
</dbReference>
<dbReference type="PANTHER" id="PTHR15892">
    <property type="entry name" value="MITOCHONDRIAL RIBOSOMAL PROTEIN L30"/>
    <property type="match status" value="1"/>
</dbReference>
<dbReference type="Pfam" id="PF00327">
    <property type="entry name" value="Ribosomal_L30"/>
    <property type="match status" value="1"/>
</dbReference>
<dbReference type="PIRSF" id="PIRSF002211">
    <property type="entry name" value="Ribosomal_L30_bac-type"/>
    <property type="match status" value="1"/>
</dbReference>
<dbReference type="SUPFAM" id="SSF55129">
    <property type="entry name" value="Ribosomal protein L30p/L7e"/>
    <property type="match status" value="1"/>
</dbReference>